<evidence type="ECO:0000255" key="1">
    <source>
        <dbReference type="HAMAP-Rule" id="MF_01039"/>
    </source>
</evidence>
<feature type="chain" id="PRO_0000179866" description="2,3-bisphosphoglycerate-dependent phosphoglycerate mutase">
    <location>
        <begin position="1"/>
        <end position="247"/>
    </location>
</feature>
<feature type="active site" description="Tele-phosphohistidine intermediate" evidence="1">
    <location>
        <position position="9"/>
    </location>
</feature>
<feature type="active site" description="Proton donor/acceptor" evidence="1">
    <location>
        <position position="87"/>
    </location>
</feature>
<feature type="binding site" evidence="1">
    <location>
        <begin position="8"/>
        <end position="15"/>
    </location>
    <ligand>
        <name>substrate</name>
    </ligand>
</feature>
<feature type="binding site" evidence="1">
    <location>
        <begin position="21"/>
        <end position="22"/>
    </location>
    <ligand>
        <name>substrate</name>
    </ligand>
</feature>
<feature type="binding site" evidence="1">
    <location>
        <position position="60"/>
    </location>
    <ligand>
        <name>substrate</name>
    </ligand>
</feature>
<feature type="binding site" evidence="1">
    <location>
        <begin position="87"/>
        <end position="90"/>
    </location>
    <ligand>
        <name>substrate</name>
    </ligand>
</feature>
<feature type="binding site" evidence="1">
    <location>
        <position position="98"/>
    </location>
    <ligand>
        <name>substrate</name>
    </ligand>
</feature>
<feature type="binding site" evidence="1">
    <location>
        <begin position="114"/>
        <end position="115"/>
    </location>
    <ligand>
        <name>substrate</name>
    </ligand>
</feature>
<feature type="binding site" evidence="1">
    <location>
        <begin position="183"/>
        <end position="184"/>
    </location>
    <ligand>
        <name>substrate</name>
    </ligand>
</feature>
<feature type="site" description="Transition state stabilizer" evidence="1">
    <location>
        <position position="182"/>
    </location>
</feature>
<sequence length="247" mass="28434">MKKLVLLRHGESQWNRENRFTGWVDVDLSEKGREEARTAGQLLKDEGFVFDLAYTSVLKRAIRTLWTVLDEMNLMWIPVTKNWRLNERHYGALQGLNKAETAQRHGDEQVLIWRRSYDTPPPALTESDEFWPGKDPRYASLSSQELPATECLKDTVARFLPYWHETIAPQIRDGKNVIITAHGNSLRALVKYLDNISDEDIVGLNIPTGIPLVYELDDDLKPLKSYYLGDQEELKKKVEVVVKQGKA</sequence>
<dbReference type="EC" id="5.4.2.11" evidence="1"/>
<dbReference type="EMBL" id="AE006470">
    <property type="protein sequence ID" value="AAM71645.1"/>
    <property type="molecule type" value="Genomic_DNA"/>
</dbReference>
<dbReference type="RefSeq" id="NP_661303.1">
    <property type="nucleotide sequence ID" value="NC_002932.3"/>
</dbReference>
<dbReference type="RefSeq" id="WP_010932091.1">
    <property type="nucleotide sequence ID" value="NC_002932.3"/>
</dbReference>
<dbReference type="SMR" id="Q8KFC8"/>
<dbReference type="STRING" id="194439.CT0399"/>
<dbReference type="EnsemblBacteria" id="AAM71645">
    <property type="protein sequence ID" value="AAM71645"/>
    <property type="gene ID" value="CT0399"/>
</dbReference>
<dbReference type="KEGG" id="cte:CT0399"/>
<dbReference type="PATRIC" id="fig|194439.7.peg.386"/>
<dbReference type="eggNOG" id="COG0588">
    <property type="taxonomic scope" value="Bacteria"/>
</dbReference>
<dbReference type="HOGENOM" id="CLU_033323_1_1_10"/>
<dbReference type="OrthoDB" id="9782128at2"/>
<dbReference type="UniPathway" id="UPA00109">
    <property type="reaction ID" value="UER00186"/>
</dbReference>
<dbReference type="Proteomes" id="UP000001007">
    <property type="component" value="Chromosome"/>
</dbReference>
<dbReference type="GO" id="GO:0004619">
    <property type="term" value="F:phosphoglycerate mutase activity"/>
    <property type="evidence" value="ECO:0007669"/>
    <property type="project" value="UniProtKB-EC"/>
</dbReference>
<dbReference type="GO" id="GO:0006094">
    <property type="term" value="P:gluconeogenesis"/>
    <property type="evidence" value="ECO:0007669"/>
    <property type="project" value="UniProtKB-UniRule"/>
</dbReference>
<dbReference type="GO" id="GO:0006096">
    <property type="term" value="P:glycolytic process"/>
    <property type="evidence" value="ECO:0007669"/>
    <property type="project" value="UniProtKB-UniRule"/>
</dbReference>
<dbReference type="CDD" id="cd07067">
    <property type="entry name" value="HP_PGM_like"/>
    <property type="match status" value="1"/>
</dbReference>
<dbReference type="FunFam" id="3.40.50.1240:FF:000003">
    <property type="entry name" value="2,3-bisphosphoglycerate-dependent phosphoglycerate mutase"/>
    <property type="match status" value="1"/>
</dbReference>
<dbReference type="Gene3D" id="3.40.50.1240">
    <property type="entry name" value="Phosphoglycerate mutase-like"/>
    <property type="match status" value="1"/>
</dbReference>
<dbReference type="HAMAP" id="MF_01039">
    <property type="entry name" value="PGAM_GpmA"/>
    <property type="match status" value="1"/>
</dbReference>
<dbReference type="InterPro" id="IPR013078">
    <property type="entry name" value="His_Pase_superF_clade-1"/>
</dbReference>
<dbReference type="InterPro" id="IPR029033">
    <property type="entry name" value="His_PPase_superfam"/>
</dbReference>
<dbReference type="InterPro" id="IPR001345">
    <property type="entry name" value="PG/BPGM_mutase_AS"/>
</dbReference>
<dbReference type="InterPro" id="IPR005952">
    <property type="entry name" value="Phosphogly_mut1"/>
</dbReference>
<dbReference type="NCBIfam" id="TIGR01258">
    <property type="entry name" value="pgm_1"/>
    <property type="match status" value="1"/>
</dbReference>
<dbReference type="NCBIfam" id="NF010713">
    <property type="entry name" value="PRK14115.1"/>
    <property type="match status" value="1"/>
</dbReference>
<dbReference type="NCBIfam" id="NF010718">
    <property type="entry name" value="PRK14120.1"/>
    <property type="match status" value="1"/>
</dbReference>
<dbReference type="PANTHER" id="PTHR11931">
    <property type="entry name" value="PHOSPHOGLYCERATE MUTASE"/>
    <property type="match status" value="1"/>
</dbReference>
<dbReference type="Pfam" id="PF00300">
    <property type="entry name" value="His_Phos_1"/>
    <property type="match status" value="1"/>
</dbReference>
<dbReference type="PIRSF" id="PIRSF000709">
    <property type="entry name" value="6PFK_2-Ptase"/>
    <property type="match status" value="1"/>
</dbReference>
<dbReference type="SMART" id="SM00855">
    <property type="entry name" value="PGAM"/>
    <property type="match status" value="1"/>
</dbReference>
<dbReference type="SUPFAM" id="SSF53254">
    <property type="entry name" value="Phosphoglycerate mutase-like"/>
    <property type="match status" value="1"/>
</dbReference>
<dbReference type="PROSITE" id="PS00175">
    <property type="entry name" value="PG_MUTASE"/>
    <property type="match status" value="1"/>
</dbReference>
<protein>
    <recommendedName>
        <fullName evidence="1">2,3-bisphosphoglycerate-dependent phosphoglycerate mutase</fullName>
        <shortName evidence="1">BPG-dependent PGAM</shortName>
        <shortName evidence="1">PGAM</shortName>
        <shortName evidence="1">Phosphoglyceromutase</shortName>
        <shortName evidence="1">dPGM</shortName>
        <ecNumber evidence="1">5.4.2.11</ecNumber>
    </recommendedName>
</protein>
<organism>
    <name type="scientific">Chlorobaculum tepidum (strain ATCC 49652 / DSM 12025 / NBRC 103806 / TLS)</name>
    <name type="common">Chlorobium tepidum</name>
    <dbReference type="NCBI Taxonomy" id="194439"/>
    <lineage>
        <taxon>Bacteria</taxon>
        <taxon>Pseudomonadati</taxon>
        <taxon>Chlorobiota</taxon>
        <taxon>Chlorobiia</taxon>
        <taxon>Chlorobiales</taxon>
        <taxon>Chlorobiaceae</taxon>
        <taxon>Chlorobaculum</taxon>
    </lineage>
</organism>
<keyword id="KW-0312">Gluconeogenesis</keyword>
<keyword id="KW-0324">Glycolysis</keyword>
<keyword id="KW-0413">Isomerase</keyword>
<keyword id="KW-1185">Reference proteome</keyword>
<comment type="function">
    <text evidence="1">Catalyzes the interconversion of 2-phosphoglycerate and 3-phosphoglycerate.</text>
</comment>
<comment type="catalytic activity">
    <reaction evidence="1">
        <text>(2R)-2-phosphoglycerate = (2R)-3-phosphoglycerate</text>
        <dbReference type="Rhea" id="RHEA:15901"/>
        <dbReference type="ChEBI" id="CHEBI:58272"/>
        <dbReference type="ChEBI" id="CHEBI:58289"/>
        <dbReference type="EC" id="5.4.2.11"/>
    </reaction>
</comment>
<comment type="pathway">
    <text evidence="1">Carbohydrate degradation; glycolysis; pyruvate from D-glyceraldehyde 3-phosphate: step 3/5.</text>
</comment>
<comment type="similarity">
    <text evidence="1">Belongs to the phosphoglycerate mutase family. BPG-dependent PGAM subfamily.</text>
</comment>
<reference key="1">
    <citation type="journal article" date="2002" name="Proc. Natl. Acad. Sci. U.S.A.">
        <title>The complete genome sequence of Chlorobium tepidum TLS, a photosynthetic, anaerobic, green-sulfur bacterium.</title>
        <authorList>
            <person name="Eisen J.A."/>
            <person name="Nelson K.E."/>
            <person name="Paulsen I.T."/>
            <person name="Heidelberg J.F."/>
            <person name="Wu M."/>
            <person name="Dodson R.J."/>
            <person name="DeBoy R.T."/>
            <person name="Gwinn M.L."/>
            <person name="Nelson W.C."/>
            <person name="Haft D.H."/>
            <person name="Hickey E.K."/>
            <person name="Peterson J.D."/>
            <person name="Durkin A.S."/>
            <person name="Kolonay J.F."/>
            <person name="Yang F."/>
            <person name="Holt I.E."/>
            <person name="Umayam L.A."/>
            <person name="Mason T.M."/>
            <person name="Brenner M."/>
            <person name="Shea T.P."/>
            <person name="Parksey D.S."/>
            <person name="Nierman W.C."/>
            <person name="Feldblyum T.V."/>
            <person name="Hansen C.L."/>
            <person name="Craven M.B."/>
            <person name="Radune D."/>
            <person name="Vamathevan J.J."/>
            <person name="Khouri H.M."/>
            <person name="White O."/>
            <person name="Gruber T.M."/>
            <person name="Ketchum K.A."/>
            <person name="Venter J.C."/>
            <person name="Tettelin H."/>
            <person name="Bryant D.A."/>
            <person name="Fraser C.M."/>
        </authorList>
    </citation>
    <scope>NUCLEOTIDE SEQUENCE [LARGE SCALE GENOMIC DNA]</scope>
    <source>
        <strain>ATCC 49652 / DSM 12025 / NBRC 103806 / TLS</strain>
    </source>
</reference>
<name>GPMA_CHLTE</name>
<proteinExistence type="inferred from homology"/>
<accession>Q8KFC8</accession>
<gene>
    <name evidence="1" type="primary">gpmA</name>
    <name type="synonym">gpm</name>
    <name type="ordered locus">CT0399</name>
</gene>